<organism>
    <name type="scientific">Giraffa camelopardalis</name>
    <name type="common">Giraffe</name>
    <dbReference type="NCBI Taxonomy" id="9894"/>
    <lineage>
        <taxon>Eukaryota</taxon>
        <taxon>Metazoa</taxon>
        <taxon>Chordata</taxon>
        <taxon>Craniata</taxon>
        <taxon>Vertebrata</taxon>
        <taxon>Euteleostomi</taxon>
        <taxon>Mammalia</taxon>
        <taxon>Eutheria</taxon>
        <taxon>Laurasiatheria</taxon>
        <taxon>Artiodactyla</taxon>
        <taxon>Ruminantia</taxon>
        <taxon>Pecora</taxon>
        <taxon>Giraffidae</taxon>
        <taxon>Giraffa</taxon>
    </lineage>
</organism>
<proteinExistence type="inferred from homology"/>
<dbReference type="EMBL" id="U55050">
    <property type="protein sequence ID" value="AAA99814.1"/>
    <property type="molecule type" value="Genomic_DNA"/>
</dbReference>
<dbReference type="SMR" id="Q95187"/>
<dbReference type="GO" id="GO:0005615">
    <property type="term" value="C:extracellular space"/>
    <property type="evidence" value="ECO:0007669"/>
    <property type="project" value="UniProtKB-KW"/>
</dbReference>
<dbReference type="GO" id="GO:0005125">
    <property type="term" value="F:cytokine activity"/>
    <property type="evidence" value="ECO:0007669"/>
    <property type="project" value="UniProtKB-KW"/>
</dbReference>
<dbReference type="GO" id="GO:0005126">
    <property type="term" value="F:cytokine receptor binding"/>
    <property type="evidence" value="ECO:0007669"/>
    <property type="project" value="InterPro"/>
</dbReference>
<dbReference type="GO" id="GO:0005179">
    <property type="term" value="F:hormone activity"/>
    <property type="evidence" value="ECO:0007669"/>
    <property type="project" value="UniProtKB-KW"/>
</dbReference>
<dbReference type="GO" id="GO:0051607">
    <property type="term" value="P:defense response to virus"/>
    <property type="evidence" value="ECO:0007669"/>
    <property type="project" value="UniProtKB-KW"/>
</dbReference>
<dbReference type="GO" id="GO:0007565">
    <property type="term" value="P:female pregnancy"/>
    <property type="evidence" value="ECO:0007669"/>
    <property type="project" value="UniProtKB-KW"/>
</dbReference>
<dbReference type="CDD" id="cd00095">
    <property type="entry name" value="IFab"/>
    <property type="match status" value="1"/>
</dbReference>
<dbReference type="FunFam" id="1.20.1250.10:FF:000001">
    <property type="entry name" value="Interferon alpha"/>
    <property type="match status" value="1"/>
</dbReference>
<dbReference type="Gene3D" id="1.20.1250.10">
    <property type="match status" value="1"/>
</dbReference>
<dbReference type="InterPro" id="IPR009079">
    <property type="entry name" value="4_helix_cytokine-like_core"/>
</dbReference>
<dbReference type="InterPro" id="IPR000471">
    <property type="entry name" value="Interferon_alpha/beta/delta"/>
</dbReference>
<dbReference type="PANTHER" id="PTHR11691:SF37">
    <property type="entry name" value="INTERFERON OMEGA-1"/>
    <property type="match status" value="1"/>
</dbReference>
<dbReference type="PANTHER" id="PTHR11691">
    <property type="entry name" value="TYPE I INTERFERON"/>
    <property type="match status" value="1"/>
</dbReference>
<dbReference type="Pfam" id="PF00143">
    <property type="entry name" value="Interferon"/>
    <property type="match status" value="1"/>
</dbReference>
<dbReference type="PRINTS" id="PR00266">
    <property type="entry name" value="INTERFERONAB"/>
</dbReference>
<dbReference type="SMART" id="SM00076">
    <property type="entry name" value="IFabd"/>
    <property type="match status" value="1"/>
</dbReference>
<dbReference type="SUPFAM" id="SSF47266">
    <property type="entry name" value="4-helical cytokines"/>
    <property type="match status" value="1"/>
</dbReference>
<dbReference type="PROSITE" id="PS00252">
    <property type="entry name" value="INTERFERON_A_B_D"/>
    <property type="match status" value="1"/>
</dbReference>
<evidence type="ECO:0000250" key="1"/>
<evidence type="ECO:0000255" key="2"/>
<evidence type="ECO:0000305" key="3"/>
<gene>
    <name type="primary">IFNT</name>
</gene>
<name>IFNT_GIRCA</name>
<keyword id="KW-0051">Antiviral defense</keyword>
<keyword id="KW-0202">Cytokine</keyword>
<keyword id="KW-1015">Disulfide bond</keyword>
<keyword id="KW-0372">Hormone</keyword>
<keyword id="KW-0635">Pregnancy</keyword>
<keyword id="KW-0964">Secreted</keyword>
<keyword id="KW-0732">Signal</keyword>
<accession>Q95187</accession>
<sequence length="195" mass="22046">MAFMLSLLMALVLVSYGLGGSLGCYLSENHMLHAQKNLKLLARMNRLSPHSCLQDRKDFGLPRKMVEGSQLQKDQAISVLHEMLQQCFNLFHTERSSAAWDNTLLEQLCTGLHQQLDDLDARLGPLMGQKDSGMGRMGPILTVKKYFQGIHVYLKEKKYSDCAWEVIRVEMMRALSSSTTLQERLKKMGGNLNSP</sequence>
<protein>
    <recommendedName>
        <fullName>Interferon tau</fullName>
        <shortName>IFN-tau</shortName>
    </recommendedName>
    <alternativeName>
        <fullName>Antiluteolysin</fullName>
    </alternativeName>
    <alternativeName>
        <fullName>Trophoblast antiluteolytic protein</fullName>
    </alternativeName>
    <alternativeName>
        <fullName>Trophoblast protein 1</fullName>
        <shortName>TP-1</shortName>
    </alternativeName>
    <alternativeName>
        <fullName>Trophoblastin</fullName>
    </alternativeName>
</protein>
<feature type="signal peptide" evidence="1">
    <location>
        <begin position="1"/>
        <end position="23"/>
    </location>
</feature>
<feature type="chain" id="PRO_0000016425" description="Interferon tau">
    <location>
        <begin position="24"/>
        <end position="195"/>
    </location>
</feature>
<feature type="disulfide bond" evidence="1">
    <location>
        <begin position="52"/>
        <end position="162"/>
    </location>
</feature>
<feature type="disulfide bond" evidence="2">
    <location>
        <begin position="87"/>
        <end position="109"/>
    </location>
</feature>
<comment type="function">
    <text evidence="1">Paracrine hormone primarily responsible for maternal recognition of pregnancy. Interacts with endometrial receptors, probably type I interferon receptors, and blocks estrogen receptor expression, preventing the estrogen-induced increase in oxytocin receptor expression in the endometrium. This results in the suppression of the pulsatile endometrial release of the luteolytic hormone prostaglandin F2-alpha, hindering the regression of the corpus luteum (luteolysis) and therefore a return to ovarian cyclicity. This, and a possible direct effect of IFN-tau on prostaglandin synthesis, leads in turn to continued ovarian progesterone secretion, which stimulates the secretion by the endometrium of the nutrients required for the growth of the conceptus. In summary, displays particularly high antiviral and antiproliferative potency concurrently with particular weak cytotoxicity, high antiluteolytic activity and immunomodulatory properties. In contrast with other IFNs, IFN-tau is not virally inducible (By similarity).</text>
</comment>
<comment type="subcellular location">
    <subcellularLocation>
        <location>Secreted</location>
    </subcellularLocation>
    <text>Secreted into the uterine lumen.</text>
</comment>
<comment type="similarity">
    <text evidence="3">Belongs to the alpha/beta interferon family. IFN-alphaII subfamily.</text>
</comment>
<reference key="1">
    <citation type="journal article" date="1996" name="J. Interferon Cytokine Res.">
        <title>The interferon-tau genes of the giraffe, a nonbovid species.</title>
        <authorList>
            <person name="Liu L."/>
            <person name="Leaman D.W."/>
            <person name="Roberts R.M."/>
        </authorList>
    </citation>
    <scope>NUCLEOTIDE SEQUENCE [GENOMIC DNA]</scope>
</reference>